<gene>
    <name evidence="1" type="primary">rpl14e</name>
    <name type="ordered locus">DKAM_1148</name>
</gene>
<comment type="similarity">
    <text evidence="1">Belongs to the eukaryotic ribosomal protein eL14 family.</text>
</comment>
<proteinExistence type="inferred from homology"/>
<organism>
    <name type="scientific">Desulfurococcus amylolyticus (strain DSM 18924 / JCM 16383 / VKM B-2413 / 1221n)</name>
    <name type="common">Desulfurococcus kamchatkensis</name>
    <dbReference type="NCBI Taxonomy" id="490899"/>
    <lineage>
        <taxon>Archaea</taxon>
        <taxon>Thermoproteota</taxon>
        <taxon>Thermoprotei</taxon>
        <taxon>Desulfurococcales</taxon>
        <taxon>Desulfurococcaceae</taxon>
        <taxon>Desulfurococcus</taxon>
    </lineage>
</organism>
<feature type="chain" id="PRO_1000193770" description="Large ribosomal subunit protein eL14">
    <location>
        <begin position="1"/>
        <end position="96"/>
    </location>
</feature>
<evidence type="ECO:0000255" key="1">
    <source>
        <dbReference type="HAMAP-Rule" id="MF_00721"/>
    </source>
</evidence>
<evidence type="ECO:0000305" key="2"/>
<sequence length="96" mass="10546">MPAIEIGRICVKTAGREAGRKCIIVDIIDDNFVLVTGPKSLTGVKRRKVNIKHLEPTDKSIKIPRGASDEEVLKAIGENGLTDYMVEHVKPKLTPI</sequence>
<keyword id="KW-0687">Ribonucleoprotein</keyword>
<keyword id="KW-0689">Ribosomal protein</keyword>
<dbReference type="EMBL" id="CP001140">
    <property type="protein sequence ID" value="ACL11474.1"/>
    <property type="molecule type" value="Genomic_DNA"/>
</dbReference>
<dbReference type="RefSeq" id="WP_012608815.1">
    <property type="nucleotide sequence ID" value="NC_011766.1"/>
</dbReference>
<dbReference type="SMR" id="B8D5U3"/>
<dbReference type="STRING" id="490899.DKAM_1148"/>
<dbReference type="GeneID" id="7171239"/>
<dbReference type="KEGG" id="dka:DKAM_1148"/>
<dbReference type="eggNOG" id="arCOG04167">
    <property type="taxonomic scope" value="Archaea"/>
</dbReference>
<dbReference type="HOGENOM" id="CLU_183474_0_0_2"/>
<dbReference type="Proteomes" id="UP000006903">
    <property type="component" value="Chromosome"/>
</dbReference>
<dbReference type="GO" id="GO:0022625">
    <property type="term" value="C:cytosolic large ribosomal subunit"/>
    <property type="evidence" value="ECO:0007669"/>
    <property type="project" value="TreeGrafter"/>
</dbReference>
<dbReference type="GO" id="GO:0003723">
    <property type="term" value="F:RNA binding"/>
    <property type="evidence" value="ECO:0007669"/>
    <property type="project" value="InterPro"/>
</dbReference>
<dbReference type="GO" id="GO:0003735">
    <property type="term" value="F:structural constituent of ribosome"/>
    <property type="evidence" value="ECO:0007669"/>
    <property type="project" value="InterPro"/>
</dbReference>
<dbReference type="GO" id="GO:0042273">
    <property type="term" value="P:ribosomal large subunit biogenesis"/>
    <property type="evidence" value="ECO:0007669"/>
    <property type="project" value="TreeGrafter"/>
</dbReference>
<dbReference type="GO" id="GO:0006412">
    <property type="term" value="P:translation"/>
    <property type="evidence" value="ECO:0007669"/>
    <property type="project" value="UniProtKB-UniRule"/>
</dbReference>
<dbReference type="CDD" id="cd06088">
    <property type="entry name" value="KOW_RPL14"/>
    <property type="match status" value="1"/>
</dbReference>
<dbReference type="FunFam" id="2.30.30.30:FF:000045">
    <property type="entry name" value="50S ribosomal protein L14e"/>
    <property type="match status" value="1"/>
</dbReference>
<dbReference type="Gene3D" id="2.30.30.30">
    <property type="match status" value="1"/>
</dbReference>
<dbReference type="HAMAP" id="MF_00721">
    <property type="entry name" value="Ribosomal_eL14"/>
    <property type="match status" value="1"/>
</dbReference>
<dbReference type="InterPro" id="IPR005824">
    <property type="entry name" value="KOW"/>
</dbReference>
<dbReference type="InterPro" id="IPR014722">
    <property type="entry name" value="Rib_uL2_dom2"/>
</dbReference>
<dbReference type="InterPro" id="IPR039660">
    <property type="entry name" value="Ribosomal_eL14"/>
</dbReference>
<dbReference type="InterPro" id="IPR023651">
    <property type="entry name" value="Ribosomal_eL14_arc"/>
</dbReference>
<dbReference type="InterPro" id="IPR041985">
    <property type="entry name" value="Ribosomal_eL14_KOW"/>
</dbReference>
<dbReference type="InterPro" id="IPR008991">
    <property type="entry name" value="Translation_prot_SH3-like_sf"/>
</dbReference>
<dbReference type="NCBIfam" id="NF003320">
    <property type="entry name" value="PRK04333.1"/>
    <property type="match status" value="1"/>
</dbReference>
<dbReference type="PANTHER" id="PTHR11127">
    <property type="entry name" value="60S RIBOSOMAL PROTEIN L14"/>
    <property type="match status" value="1"/>
</dbReference>
<dbReference type="PANTHER" id="PTHR11127:SF2">
    <property type="entry name" value="LARGE RIBOSOMAL SUBUNIT PROTEIN EL14"/>
    <property type="match status" value="1"/>
</dbReference>
<dbReference type="Pfam" id="PF00467">
    <property type="entry name" value="KOW"/>
    <property type="match status" value="1"/>
</dbReference>
<dbReference type="SUPFAM" id="SSF50104">
    <property type="entry name" value="Translation proteins SH3-like domain"/>
    <property type="match status" value="1"/>
</dbReference>
<reference key="1">
    <citation type="journal article" date="2009" name="J. Bacteriol.">
        <title>Complete genome sequence of the anaerobic, protein-degrading hyperthermophilic crenarchaeon Desulfurococcus kamchatkensis.</title>
        <authorList>
            <person name="Ravin N.V."/>
            <person name="Mardanov A.V."/>
            <person name="Beletsky A.V."/>
            <person name="Kublanov I.V."/>
            <person name="Kolganova T.V."/>
            <person name="Lebedinsky A.V."/>
            <person name="Chernyh N.A."/>
            <person name="Bonch-Osmolovskaya E.A."/>
            <person name="Skryabin K.G."/>
        </authorList>
    </citation>
    <scope>NUCLEOTIDE SEQUENCE [LARGE SCALE GENOMIC DNA]</scope>
    <source>
        <strain>DSM 18924 / JCM 16383 / VKM B-2413 / 1221n</strain>
    </source>
</reference>
<protein>
    <recommendedName>
        <fullName evidence="1">Large ribosomal subunit protein eL14</fullName>
    </recommendedName>
    <alternativeName>
        <fullName evidence="2">50S ribosomal protein L14e</fullName>
    </alternativeName>
</protein>
<name>RL14E_DESA1</name>
<accession>B8D5U3</accession>